<name>RL4_SALSV</name>
<feature type="chain" id="PRO_1000142185" description="Large ribosomal subunit protein uL4">
    <location>
        <begin position="1"/>
        <end position="201"/>
    </location>
</feature>
<feature type="region of interest" description="Disordered" evidence="2">
    <location>
        <begin position="44"/>
        <end position="71"/>
    </location>
</feature>
<protein>
    <recommendedName>
        <fullName evidence="1">Large ribosomal subunit protein uL4</fullName>
    </recommendedName>
    <alternativeName>
        <fullName evidence="3">50S ribosomal protein L4</fullName>
    </alternativeName>
</protein>
<accession>B4TXE1</accession>
<dbReference type="EMBL" id="CP001127">
    <property type="protein sequence ID" value="ACF91235.1"/>
    <property type="molecule type" value="Genomic_DNA"/>
</dbReference>
<dbReference type="RefSeq" id="WP_000424395.1">
    <property type="nucleotide sequence ID" value="NC_011094.1"/>
</dbReference>
<dbReference type="SMR" id="B4TXE1"/>
<dbReference type="GeneID" id="97442859"/>
<dbReference type="KEGG" id="sew:SeSA_A3635"/>
<dbReference type="HOGENOM" id="CLU_041575_5_2_6"/>
<dbReference type="Proteomes" id="UP000001865">
    <property type="component" value="Chromosome"/>
</dbReference>
<dbReference type="GO" id="GO:1990904">
    <property type="term" value="C:ribonucleoprotein complex"/>
    <property type="evidence" value="ECO:0007669"/>
    <property type="project" value="UniProtKB-KW"/>
</dbReference>
<dbReference type="GO" id="GO:0005840">
    <property type="term" value="C:ribosome"/>
    <property type="evidence" value="ECO:0007669"/>
    <property type="project" value="UniProtKB-KW"/>
</dbReference>
<dbReference type="GO" id="GO:0019843">
    <property type="term" value="F:rRNA binding"/>
    <property type="evidence" value="ECO:0007669"/>
    <property type="project" value="UniProtKB-UniRule"/>
</dbReference>
<dbReference type="GO" id="GO:0003735">
    <property type="term" value="F:structural constituent of ribosome"/>
    <property type="evidence" value="ECO:0007669"/>
    <property type="project" value="InterPro"/>
</dbReference>
<dbReference type="GO" id="GO:0006412">
    <property type="term" value="P:translation"/>
    <property type="evidence" value="ECO:0007669"/>
    <property type="project" value="UniProtKB-UniRule"/>
</dbReference>
<dbReference type="FunFam" id="3.40.1370.10:FF:000001">
    <property type="entry name" value="50S ribosomal protein L4"/>
    <property type="match status" value="1"/>
</dbReference>
<dbReference type="Gene3D" id="3.40.1370.10">
    <property type="match status" value="1"/>
</dbReference>
<dbReference type="HAMAP" id="MF_01328_B">
    <property type="entry name" value="Ribosomal_uL4_B"/>
    <property type="match status" value="1"/>
</dbReference>
<dbReference type="InterPro" id="IPR002136">
    <property type="entry name" value="Ribosomal_uL4"/>
</dbReference>
<dbReference type="InterPro" id="IPR013005">
    <property type="entry name" value="Ribosomal_uL4-like"/>
</dbReference>
<dbReference type="InterPro" id="IPR023574">
    <property type="entry name" value="Ribosomal_uL4_dom_sf"/>
</dbReference>
<dbReference type="NCBIfam" id="TIGR03953">
    <property type="entry name" value="rplD_bact"/>
    <property type="match status" value="1"/>
</dbReference>
<dbReference type="PANTHER" id="PTHR10746">
    <property type="entry name" value="50S RIBOSOMAL PROTEIN L4"/>
    <property type="match status" value="1"/>
</dbReference>
<dbReference type="PANTHER" id="PTHR10746:SF6">
    <property type="entry name" value="LARGE RIBOSOMAL SUBUNIT PROTEIN UL4M"/>
    <property type="match status" value="1"/>
</dbReference>
<dbReference type="Pfam" id="PF00573">
    <property type="entry name" value="Ribosomal_L4"/>
    <property type="match status" value="1"/>
</dbReference>
<dbReference type="SUPFAM" id="SSF52166">
    <property type="entry name" value="Ribosomal protein L4"/>
    <property type="match status" value="1"/>
</dbReference>
<gene>
    <name evidence="1" type="primary">rplD</name>
    <name type="ordered locus">SeSA_A3635</name>
</gene>
<evidence type="ECO:0000255" key="1">
    <source>
        <dbReference type="HAMAP-Rule" id="MF_01328"/>
    </source>
</evidence>
<evidence type="ECO:0000256" key="2">
    <source>
        <dbReference type="SAM" id="MobiDB-lite"/>
    </source>
</evidence>
<evidence type="ECO:0000305" key="3"/>
<reference key="1">
    <citation type="journal article" date="2011" name="J. Bacteriol.">
        <title>Comparative genomics of 28 Salmonella enterica isolates: evidence for CRISPR-mediated adaptive sublineage evolution.</title>
        <authorList>
            <person name="Fricke W.F."/>
            <person name="Mammel M.K."/>
            <person name="McDermott P.F."/>
            <person name="Tartera C."/>
            <person name="White D.G."/>
            <person name="Leclerc J.E."/>
            <person name="Ravel J."/>
            <person name="Cebula T.A."/>
        </authorList>
    </citation>
    <scope>NUCLEOTIDE SEQUENCE [LARGE SCALE GENOMIC DNA]</scope>
    <source>
        <strain>CVM19633</strain>
    </source>
</reference>
<proteinExistence type="inferred from homology"/>
<sequence length="201" mass="22087">MELVLKDAQSALTVSETTFGRDFNEALVHQVVVAYAAGARQGTRAQKTRAEVTGSGKKPWRQKGTGRARSGSIKSPIWRSGGVTFAARPQDHSQKVNKKMYRGALKSILSELVRQDRLIVVEKFSVEAPKTKLLAQKLKDMALEDVLIITGELDENLFLAARNLHKVDVRDATGIDPVSLIAFDKVVMTADAVKQVEEMLA</sequence>
<organism>
    <name type="scientific">Salmonella schwarzengrund (strain CVM19633)</name>
    <dbReference type="NCBI Taxonomy" id="439843"/>
    <lineage>
        <taxon>Bacteria</taxon>
        <taxon>Pseudomonadati</taxon>
        <taxon>Pseudomonadota</taxon>
        <taxon>Gammaproteobacteria</taxon>
        <taxon>Enterobacterales</taxon>
        <taxon>Enterobacteriaceae</taxon>
        <taxon>Salmonella</taxon>
    </lineage>
</organism>
<comment type="function">
    <text evidence="1">One of the primary rRNA binding proteins, this protein initially binds near the 5'-end of the 23S rRNA. It is important during the early stages of 50S assembly. It makes multiple contacts with different domains of the 23S rRNA in the assembled 50S subunit and ribosome.</text>
</comment>
<comment type="function">
    <text evidence="1">Forms part of the polypeptide exit tunnel.</text>
</comment>
<comment type="subunit">
    <text evidence="1">Part of the 50S ribosomal subunit.</text>
</comment>
<comment type="similarity">
    <text evidence="1">Belongs to the universal ribosomal protein uL4 family.</text>
</comment>
<keyword id="KW-0687">Ribonucleoprotein</keyword>
<keyword id="KW-0689">Ribosomal protein</keyword>
<keyword id="KW-0694">RNA-binding</keyword>
<keyword id="KW-0699">rRNA-binding</keyword>